<protein>
    <recommendedName>
        <fullName>Next to BRCA1 gene 1 protein</fullName>
    </recommendedName>
    <alternativeName>
        <fullName>Cell migration-inducing gene 19 protein</fullName>
    </alternativeName>
    <alternativeName>
        <fullName>Membrane component chromosome 17 surface marker 2</fullName>
    </alternativeName>
    <alternativeName>
        <fullName>Neighbor of BRCA1 gene 1 protein</fullName>
    </alternativeName>
    <alternativeName>
        <fullName>Protein 1A1-3B</fullName>
    </alternativeName>
</protein>
<evidence type="ECO:0000250" key="1">
    <source>
        <dbReference type="UniProtKB" id="P97432"/>
    </source>
</evidence>
<evidence type="ECO:0000250" key="2">
    <source>
        <dbReference type="UniProtKB" id="Q501R9"/>
    </source>
</evidence>
<evidence type="ECO:0000255" key="3">
    <source>
        <dbReference type="PROSITE-ProRule" id="PRU00212"/>
    </source>
</evidence>
<evidence type="ECO:0000255" key="4">
    <source>
        <dbReference type="PROSITE-ProRule" id="PRU00228"/>
    </source>
</evidence>
<evidence type="ECO:0000255" key="5">
    <source>
        <dbReference type="PROSITE-ProRule" id="PRU01081"/>
    </source>
</evidence>
<evidence type="ECO:0000256" key="6">
    <source>
        <dbReference type="SAM" id="MobiDB-lite"/>
    </source>
</evidence>
<evidence type="ECO:0000269" key="7">
    <source>
    </source>
</evidence>
<evidence type="ECO:0000269" key="8">
    <source>
    </source>
</evidence>
<evidence type="ECO:0000269" key="9">
    <source>
    </source>
</evidence>
<evidence type="ECO:0000269" key="10">
    <source>
    </source>
</evidence>
<evidence type="ECO:0000269" key="11">
    <source>
    </source>
</evidence>
<evidence type="ECO:0000269" key="12">
    <source>
    </source>
</evidence>
<evidence type="ECO:0000269" key="13">
    <source>
    </source>
</evidence>
<evidence type="ECO:0000269" key="14">
    <source>
    </source>
</evidence>
<evidence type="ECO:0000269" key="15">
    <source>
    </source>
</evidence>
<evidence type="ECO:0000269" key="16">
    <source>
    </source>
</evidence>
<evidence type="ECO:0000269" key="17">
    <source>
    </source>
</evidence>
<evidence type="ECO:0000269" key="18">
    <source>
    </source>
</evidence>
<evidence type="ECO:0000269" key="19">
    <source>
    </source>
</evidence>
<evidence type="ECO:0000269" key="20">
    <source>
    </source>
</evidence>
<evidence type="ECO:0000303" key="21">
    <source>
    </source>
</evidence>
<evidence type="ECO:0000305" key="22"/>
<evidence type="ECO:0000305" key="23">
    <source>
    </source>
</evidence>
<evidence type="ECO:0007744" key="24">
    <source>
        <dbReference type="PDB" id="2MGW"/>
    </source>
</evidence>
<evidence type="ECO:0007744" key="25">
    <source>
        <dbReference type="PDB" id="2MJ5"/>
    </source>
</evidence>
<evidence type="ECO:0007744" key="26">
    <source>
    </source>
</evidence>
<evidence type="ECO:0007829" key="27">
    <source>
        <dbReference type="PDB" id="2BKF"/>
    </source>
</evidence>
<evidence type="ECO:0007829" key="28">
    <source>
        <dbReference type="PDB" id="2CP8"/>
    </source>
</evidence>
<evidence type="ECO:0007829" key="29">
    <source>
        <dbReference type="PDB" id="4OLE"/>
    </source>
</evidence>
<name>NBR1_HUMAN</name>
<comment type="function">
    <text evidence="1 11 14 15 17 18 19">Ubiquitin-binding autophagy adapter that participates in different processes including host defense or intracellular homeostasis (PubMed:24692539, PubMed:33577621). Possesses a double function during the selective autophagy by acting as a shuttle bringing ubiquitinated proteins to autophagosomes and also by participating in the formation of protein aggregates (PubMed:24879152, PubMed:34471133). Plays a role in the regulation of the innate immune response by modulating type I interferon production and targeting ubiquitinated IRF3 for autophagic degradation (PubMed:35914352). In response to oxidative stress, promotes an increase in SQSTM1 levels, phosphorylation, and body formation by preventing its autophagic degradation (By similarity). In turn, activates the KEAP1-NRF2/NFE2L2 antioxidant pathway (By similarity). Also plays non-autophagy role by mediating the shuttle of IL-12 to late endosome for subsequent secretion (By similarity).</text>
</comment>
<comment type="subunit">
    <text evidence="1 2 8 10 11 12 16 18 19">Homooligomer and heterooligomer. Interacts with TRIM55 (By similarity). Interacts with titin/TTN (By similarity). Interacts with RNF29, USP8, MAP1LC3A, MAP1LC3B, MAP1LC3C, GABARAP, GABARAPL1 and GABARAPL2 (PubMed:19250911). Binds to ubiquitin and ubiquitinated proteins (PubMed:24692539). Interacts with SQSTM1 (PubMed:19250911). Interacts with TAX1BP1 (PubMed:33226137, PubMed:34471133). Interacts with IRF3; this interaction mediates autophagic degradation of IRF3 (PubMed:35914352). Interacts with IL12A and IL12B (By similarity).</text>
</comment>
<comment type="subunit">
    <text evidence="17">(Microbial infection) Interacts with Influenza A virus protein PB1; this interaction promotes NBR1-mediated selective autophagic degradation of MAVS.</text>
</comment>
<comment type="interaction">
    <interactant intactId="EBI-742698">
        <id>Q14596</id>
    </interactant>
    <interactant intactId="EBI-712001">
        <id>O95166</id>
        <label>GABARAP</label>
    </interactant>
    <organismsDiffer>false</organismsDiffer>
    <experiments>6</experiments>
</comment>
<comment type="interaction">
    <interactant intactId="EBI-742698">
        <id>Q14596</id>
    </interactant>
    <interactant intactId="EBI-746969">
        <id>Q9H0R8</id>
        <label>GABARAPL1</label>
    </interactant>
    <organismsDiffer>false</organismsDiffer>
    <experiments>4</experiments>
</comment>
<comment type="interaction">
    <interactant intactId="EBI-742698">
        <id>Q14596</id>
    </interactant>
    <interactant intactId="EBI-720116">
        <id>P60520</id>
        <label>GABARAPL2</label>
    </interactant>
    <organismsDiffer>false</organismsDiffer>
    <experiments>11</experiments>
</comment>
<comment type="interaction">
    <interactant intactId="EBI-742698">
        <id>Q14596</id>
    </interactant>
    <interactant intactId="EBI-1044067">
        <id>P49840</id>
        <label>GSK3A</label>
    </interactant>
    <organismsDiffer>false</organismsDiffer>
    <experiments>7</experiments>
</comment>
<comment type="interaction">
    <interactant intactId="EBI-742698">
        <id>Q14596</id>
    </interactant>
    <interactant intactId="EBI-373586">
        <id>P49841</id>
        <label>GSK3B</label>
    </interactant>
    <organismsDiffer>false</organismsDiffer>
    <experiments>4</experiments>
</comment>
<comment type="interaction">
    <interactant intactId="EBI-742698">
        <id>Q14596</id>
    </interactant>
    <interactant intactId="EBI-466029">
        <id>P42858</id>
        <label>HTT</label>
    </interactant>
    <organismsDiffer>false</organismsDiffer>
    <experiments>3</experiments>
</comment>
<comment type="interaction">
    <interactant intactId="EBI-742698">
        <id>Q14596</id>
    </interactant>
    <interactant intactId="EBI-720768">
        <id>Q9H492</id>
        <label>MAP1LC3A</label>
    </interactant>
    <organismsDiffer>false</organismsDiffer>
    <experiments>5</experiments>
</comment>
<comment type="interaction">
    <interactant intactId="EBI-742698">
        <id>Q14596</id>
    </interactant>
    <interactant intactId="EBI-373144">
        <id>Q9GZQ8</id>
        <label>MAP1LC3B</label>
    </interactant>
    <organismsDiffer>false</organismsDiffer>
    <experiments>9</experiments>
</comment>
<comment type="interaction">
    <interactant intactId="EBI-742698">
        <id>Q14596</id>
    </interactant>
    <interactant intactId="EBI-2603996">
        <id>Q9BXW4</id>
        <label>MAP1LC3C</label>
    </interactant>
    <organismsDiffer>false</organismsDiffer>
    <experiments>3</experiments>
</comment>
<comment type="interaction">
    <interactant intactId="EBI-742698">
        <id>Q14596</id>
    </interactant>
    <interactant intactId="EBI-307104">
        <id>Q13501</id>
        <label>SQSTM1</label>
    </interactant>
    <organismsDiffer>false</organismsDiffer>
    <experiments>7</experiments>
</comment>
<comment type="interaction">
    <interactant intactId="EBI-742698">
        <id>Q14596</id>
    </interactant>
    <interactant intactId="EBI-751132">
        <id>Q9H2B2</id>
        <label>SYT4</label>
    </interactant>
    <organismsDiffer>false</organismsDiffer>
    <experiments>3</experiments>
</comment>
<comment type="interaction">
    <interactant intactId="EBI-742698">
        <id>Q14596</id>
    </interactant>
    <interactant intactId="EBI-3390054">
        <id>P0CG48</id>
        <label>UBC</label>
    </interactant>
    <organismsDiffer>false</organismsDiffer>
    <experiments>3</experiments>
</comment>
<comment type="interaction">
    <interactant intactId="EBI-742698">
        <id>Q14596</id>
    </interactant>
    <interactant intactId="EBI-1050865">
        <id>P40818</id>
        <label>USP8</label>
    </interactant>
    <organismsDiffer>false</organismsDiffer>
    <experiments>3</experiments>
</comment>
<comment type="interaction">
    <interactant intactId="EBI-742698">
        <id>Q14596</id>
    </interactant>
    <interactant intactId="EBI-2684">
        <id>P38182</id>
        <label>ATG8</label>
    </interactant>
    <organismsDiffer>true</organismsDiffer>
    <experiments>7</experiments>
</comment>
<comment type="interaction">
    <interactant intactId="EBI-11081753">
        <id>Q14596-2</id>
    </interactant>
    <interactant intactId="EBI-16429430">
        <id>A0A0S2Z4M1</id>
        <label>AXIN1</label>
    </interactant>
    <organismsDiffer>false</organismsDiffer>
    <experiments>3</experiments>
</comment>
<comment type="interaction">
    <interactant intactId="EBI-11081753">
        <id>Q14596-2</id>
    </interactant>
    <interactant intactId="EBI-1051435">
        <id>P53582</id>
        <label>METAP1</label>
    </interactant>
    <organismsDiffer>false</organismsDiffer>
    <experiments>3</experiments>
</comment>
<comment type="interaction">
    <interactant intactId="EBI-11081753">
        <id>Q14596-2</id>
    </interactant>
    <interactant intactId="EBI-751132">
        <id>Q9H2B2</id>
        <label>SYT4</label>
    </interactant>
    <organismsDiffer>false</organismsDiffer>
    <experiments>3</experiments>
</comment>
<comment type="subcellular location">
    <subcellularLocation>
        <location evidence="12 19">Cytoplasm</location>
    </subcellularLocation>
    <subcellularLocation>
        <location evidence="11 15">Cytoplasmic vesicle</location>
        <location evidence="11 15">Autophagosome</location>
    </subcellularLocation>
    <subcellularLocation>
        <location evidence="11">Lysosome</location>
    </subcellularLocation>
    <subcellularLocation>
        <location evidence="2">Cytoplasm</location>
        <location evidence="2">Myofibril</location>
        <location evidence="2">Sarcomere</location>
        <location evidence="2">M line</location>
    </subcellularLocation>
    <text evidence="2 11">In cardiac muscles localizes to the sarcomeric M line (By similarity). Is targeted to lysosomes for degradation (PubMed:19250911).</text>
</comment>
<comment type="alternative products">
    <event type="alternative splicing"/>
    <isoform>
        <id>Q14596-1</id>
        <name>1</name>
        <sequence type="displayed"/>
    </isoform>
    <isoform>
        <id>Q14596-2</id>
        <name>2</name>
        <sequence type="described" ref="VSP_004314"/>
    </isoform>
</comment>
<comment type="induction">
    <text evidence="19">Upon viral infection.</text>
</comment>
<comment type="domain">
    <text evidence="8 11">The PB1 domain mediates interaction with SQSTM1.</text>
</comment>
<comment type="PTM">
    <text evidence="13">(Microbial infection) Cleaved by S.pyogenes SpeB protease; leading to its degradation (PubMed:24331465). Degradation by SpeB prevents autophagy, promoting to S.pyogenes intracellular replication (PubMed:24331465).</text>
</comment>
<comment type="PTM">
    <text evidence="15">Phosphorylated by GSK3A; this phosphorylation inhibits NBR1 involvement in the formation of ubiquitinated protein aggregates.</text>
</comment>
<comment type="caution">
    <text evidence="23">Was originally thought to be the ovarian carcinoma antigen CA125.</text>
</comment>
<comment type="sequence caution" evidence="22">
    <conflict type="erroneous initiation">
        <sequence resource="EMBL-CDS" id="BAA06417"/>
    </conflict>
</comment>
<proteinExistence type="evidence at protein level"/>
<gene>
    <name type="primary">NBR1</name>
    <name type="synonym">1A13B</name>
    <name type="synonym">KIAA0049</name>
    <name type="synonym">M17S2</name>
    <name type="ORF">MIG19</name>
</gene>
<keyword id="KW-0002">3D-structure</keyword>
<keyword id="KW-0025">Alternative splicing</keyword>
<keyword id="KW-0963">Cytoplasm</keyword>
<keyword id="KW-0968">Cytoplasmic vesicle</keyword>
<keyword id="KW-0945">Host-virus interaction</keyword>
<keyword id="KW-0458">Lysosome</keyword>
<keyword id="KW-0479">Metal-binding</keyword>
<keyword id="KW-0597">Phosphoprotein</keyword>
<keyword id="KW-1267">Proteomics identification</keyword>
<keyword id="KW-1185">Reference proteome</keyword>
<keyword id="KW-0832">Ubl conjugation</keyword>
<keyword id="KW-0862">Zinc</keyword>
<keyword id="KW-0863">Zinc-finger</keyword>
<sequence>MEPQVTLNVTFKNEIQSFLVSDPENTTWADIEAMVKVSFDLNTIQIKYLDEENEEVSINSQGEYEEALKMAVKQGNQLQMQVHEGHHVVDEAPPPVVGAKRLAARAGKKPLAHYSSLVRVLGSDMKTPEDPAVQSFPLVPCDTDQPQDKPPDWFTSYLETFREQVVNETVEKLEQKLHEKLVLQNPSLGSCPSEVSMPTSEETLFLPENQFSWHIACNNCQRRIVGVRYQCSLCPSYNICEDCEAGPYGHDTNHVLLKLRRPVVGSSEPFCHSKYSTPRLPAALEQVRLQKQVDKNFLKAEKQRLRAEKKQRKAEVKELKKQLKLHRKIHLWNSIHGLQSPKSPLGRPESLLQSNTLMLPLQPCTSVMPMLSAAFVDENLPDGTHLQPGTKFIKHWRMKNTGNVKWSADTKLKFMWGNLTLASTEKKDVLVPCLKAGHVGVVSVEFIAPALEGTYTSHWRLSHKGQQFGPRVWCSIIVDPFPSEESPDNIEKGMISSSKTDDLTCQQEETFLLAKEERQLGEVTEQTEGTAACIPQKAKNVASERELYIPSVDLLTAQDLLSFELLDINIVQELERVPHNTPVDVTPCMSPLPHDSPLIEKPGLGQIEEENEGAGFKALPDSMVSVKRKAENIASVEEAEEDLSGTQFVCETVIRSLTLDAAPDHNPPCRQKSLQMTFALPEGPLGNEKEEIIHIAEEEAVMEEEEDEEDEEEEDELKDEVQSQSSASSEDYIIILPECFDTSRPLGDSMYSSALSQPGLERGAEGKPGVEAGQEPAEAGERLPGGENQPQEHSISDILTTSQTLETVPLIPEVVELPPSLPRSSPCVHHHGSPGVDLPVTIPEVSSVPDQIRGEPRGSSGLVNSRQKSYDHSRHHHGSSIAGGLVKGALSVAASAYKALFAGPPVTAQPIISEDQTAALMAHLFEMGFCDRQLNLRLLKKHNYNILQVVTELLQLNNNDWYSQRY</sequence>
<feature type="chain" id="PRO_0000096746" description="Next to BRCA1 gene 1 protein">
    <location>
        <begin position="1"/>
        <end position="966"/>
    </location>
</feature>
<feature type="domain" description="PB1" evidence="5">
    <location>
        <begin position="4"/>
        <end position="85"/>
    </location>
</feature>
<feature type="domain" description="UBA" evidence="3">
    <location>
        <begin position="913"/>
        <end position="957"/>
    </location>
</feature>
<feature type="zinc finger region" description="ZZ-type" evidence="4">
    <location>
        <begin position="212"/>
        <end position="264"/>
    </location>
</feature>
<feature type="region of interest" description="ATG8 family protein-binding">
    <location>
        <begin position="542"/>
        <end position="636"/>
    </location>
</feature>
<feature type="region of interest" description="Disordered" evidence="6">
    <location>
        <begin position="699"/>
        <end position="728"/>
    </location>
</feature>
<feature type="region of interest" description="ATG8 family protein-binding">
    <location>
        <begin position="727"/>
        <end position="738"/>
    </location>
</feature>
<feature type="region of interest" description="Disordered" evidence="6">
    <location>
        <begin position="750"/>
        <end position="792"/>
    </location>
</feature>
<feature type="region of interest" description="Disordered" evidence="6">
    <location>
        <begin position="848"/>
        <end position="879"/>
    </location>
</feature>
<feature type="compositionally biased region" description="Acidic residues" evidence="6">
    <location>
        <begin position="699"/>
        <end position="718"/>
    </location>
</feature>
<feature type="binding site" evidence="4">
    <location>
        <position position="217"/>
    </location>
    <ligand>
        <name>Zn(2+)</name>
        <dbReference type="ChEBI" id="CHEBI:29105"/>
        <label>1</label>
    </ligand>
</feature>
<feature type="binding site" evidence="4">
    <location>
        <position position="220"/>
    </location>
    <ligand>
        <name>Zn(2+)</name>
        <dbReference type="ChEBI" id="CHEBI:29105"/>
        <label>1</label>
    </ligand>
</feature>
<feature type="binding site" evidence="4">
    <location>
        <position position="231"/>
    </location>
    <ligand>
        <name>Zn(2+)</name>
        <dbReference type="ChEBI" id="CHEBI:29105"/>
        <label>2</label>
    </ligand>
</feature>
<feature type="binding site" evidence="4">
    <location>
        <position position="234"/>
    </location>
    <ligand>
        <name>Zn(2+)</name>
        <dbReference type="ChEBI" id="CHEBI:29105"/>
        <label>2</label>
    </ligand>
</feature>
<feature type="binding site" evidence="4">
    <location>
        <position position="240"/>
    </location>
    <ligand>
        <name>Zn(2+)</name>
        <dbReference type="ChEBI" id="CHEBI:29105"/>
        <label>1</label>
    </ligand>
</feature>
<feature type="binding site" evidence="4">
    <location>
        <position position="243"/>
    </location>
    <ligand>
        <name>Zn(2+)</name>
        <dbReference type="ChEBI" id="CHEBI:29105"/>
        <label>1</label>
    </ligand>
</feature>
<feature type="binding site" evidence="4">
    <location>
        <position position="250"/>
    </location>
    <ligand>
        <name>Zn(2+)</name>
        <dbReference type="ChEBI" id="CHEBI:29105"/>
        <label>2</label>
    </ligand>
</feature>
<feature type="binding site" evidence="4">
    <location>
        <position position="254"/>
    </location>
    <ligand>
        <name>Zn(2+)</name>
        <dbReference type="ChEBI" id="CHEBI:29105"/>
        <label>2</label>
    </ligand>
</feature>
<feature type="modified residue" description="Phosphoserine" evidence="26">
    <location>
        <position position="116"/>
    </location>
</feature>
<feature type="modified residue" description="Phosphothreonine; by GSK3-alpha" evidence="15">
    <location>
        <position position="586"/>
    </location>
</feature>
<feature type="modified residue" description="Phosphoserine" evidence="2">
    <location>
        <position position="590"/>
    </location>
</feature>
<feature type="modified residue" description="Phosphoserine" evidence="2">
    <location>
        <position position="596"/>
    </location>
</feature>
<feature type="modified residue" description="Phosphoserine" evidence="26">
    <location>
        <position position="625"/>
    </location>
</feature>
<feature type="splice variant" id="VSP_004314" description="In isoform 2." evidence="21">
    <original>PIISEDQTAALMAHLFEMGFCDRQLNLRLLKKHNYNILQVVTELLQLNNNDWYSQRY</original>
    <variation>GLWGLLSFLHLAKKCFFLKAPSEAFSWF</variation>
    <location>
        <begin position="910"/>
        <end position="966"/>
    </location>
</feature>
<feature type="sequence variant" id="VAR_016106" description="In dbSNP:rs8482." evidence="7 9 20">
    <original>H</original>
    <variation>R</variation>
    <location>
        <position position="923"/>
    </location>
</feature>
<feature type="mutagenesis site" description="No effect on interaction with SQSTM1." evidence="8">
    <original>K</original>
    <variation>A</variation>
    <location>
        <position position="12"/>
    </location>
</feature>
<feature type="mutagenesis site" description="Loss of interaction with SQSTM1." evidence="8 11">
    <original>D</original>
    <variation>R</variation>
    <location>
        <position position="50"/>
    </location>
</feature>
<feature type="mutagenesis site" description="Loss of phosphorylation by GSK3A." evidence="15">
    <original>T</original>
    <variation>A</variation>
    <location>
        <position position="586"/>
    </location>
</feature>
<feature type="mutagenesis site" description="Loss of interaction ATG8 family proteins." evidence="11">
    <original>Y</original>
    <variation>A</variation>
    <location>
        <position position="732"/>
    </location>
</feature>
<feature type="mutagenesis site" description="About 3-fold weaker interaction with ubiquitin than WT." evidence="14">
    <original>E</original>
    <variation>A</variation>
    <location>
        <position position="926"/>
    </location>
</feature>
<feature type="mutagenesis site" description="About 2-fold weaker interaction with ubiquitin than WT." evidence="14">
    <original>G</original>
    <variation>A</variation>
    <location>
        <position position="928"/>
    </location>
</feature>
<feature type="mutagenesis site" description="Complete loss of interaction with ubiquitin." evidence="14">
    <original>F</original>
    <variation>A</variation>
    <location>
        <position position="929"/>
    </location>
</feature>
<feature type="sequence conflict" description="In Ref. 1; CAA54274." evidence="22" ref="1">
    <original>LGDSMYSSALSQPGLERGAEGKPGV</original>
    <variation>WGILCTALRSHSQAWSEVLKASLGF</variation>
    <location>
        <begin position="746"/>
        <end position="770"/>
    </location>
</feature>
<feature type="strand" evidence="27">
    <location>
        <begin position="5"/>
        <end position="11"/>
    </location>
</feature>
<feature type="strand" evidence="27">
    <location>
        <begin position="14"/>
        <end position="21"/>
    </location>
</feature>
<feature type="helix" evidence="27">
    <location>
        <begin position="23"/>
        <end position="25"/>
    </location>
</feature>
<feature type="helix" evidence="27">
    <location>
        <begin position="28"/>
        <end position="39"/>
    </location>
</feature>
<feature type="strand" evidence="27">
    <location>
        <begin position="42"/>
        <end position="49"/>
    </location>
</feature>
<feature type="strand" evidence="27">
    <location>
        <begin position="55"/>
        <end position="58"/>
    </location>
</feature>
<feature type="helix" evidence="27">
    <location>
        <begin position="61"/>
        <end position="73"/>
    </location>
</feature>
<feature type="turn" evidence="27">
    <location>
        <begin position="74"/>
        <end position="76"/>
    </location>
</feature>
<feature type="strand" evidence="27">
    <location>
        <begin position="77"/>
        <end position="84"/>
    </location>
</feature>
<feature type="strand" evidence="29">
    <location>
        <begin position="373"/>
        <end position="380"/>
    </location>
</feature>
<feature type="strand" evidence="29">
    <location>
        <begin position="384"/>
        <end position="386"/>
    </location>
</feature>
<feature type="strand" evidence="29">
    <location>
        <begin position="391"/>
        <end position="400"/>
    </location>
</feature>
<feature type="strand" evidence="29">
    <location>
        <begin position="402"/>
        <end position="404"/>
    </location>
</feature>
<feature type="strand" evidence="29">
    <location>
        <begin position="410"/>
        <end position="418"/>
    </location>
</feature>
<feature type="strand" evidence="29">
    <location>
        <begin position="420"/>
        <end position="423"/>
    </location>
</feature>
<feature type="helix" evidence="29">
    <location>
        <begin position="425"/>
        <end position="428"/>
    </location>
</feature>
<feature type="strand" evidence="29">
    <location>
        <begin position="439"/>
        <end position="447"/>
    </location>
</feature>
<feature type="strand" evidence="29">
    <location>
        <begin position="453"/>
        <end position="463"/>
    </location>
</feature>
<feature type="strand" evidence="29">
    <location>
        <begin position="466"/>
        <end position="478"/>
    </location>
</feature>
<feature type="helix" evidence="28">
    <location>
        <begin position="917"/>
        <end position="927"/>
    </location>
</feature>
<feature type="helix" evidence="28">
    <location>
        <begin position="932"/>
        <end position="939"/>
    </location>
</feature>
<feature type="turn" evidence="28">
    <location>
        <begin position="940"/>
        <end position="944"/>
    </location>
</feature>
<feature type="helix" evidence="28">
    <location>
        <begin position="946"/>
        <end position="956"/>
    </location>
</feature>
<organism>
    <name type="scientific">Homo sapiens</name>
    <name type="common">Human</name>
    <dbReference type="NCBI Taxonomy" id="9606"/>
    <lineage>
        <taxon>Eukaryota</taxon>
        <taxon>Metazoa</taxon>
        <taxon>Chordata</taxon>
        <taxon>Craniata</taxon>
        <taxon>Vertebrata</taxon>
        <taxon>Euteleostomi</taxon>
        <taxon>Mammalia</taxon>
        <taxon>Eutheria</taxon>
        <taxon>Euarchontoglires</taxon>
        <taxon>Primates</taxon>
        <taxon>Haplorrhini</taxon>
        <taxon>Catarrhini</taxon>
        <taxon>Hominidae</taxon>
        <taxon>Homo</taxon>
    </lineage>
</organism>
<accession>Q14596</accession>
<accession>Q13173</accession>
<accession>Q15026</accession>
<accession>Q5J7Q8</accession>
<accession>Q96GB6</accession>
<accession>Q9NRF7</accession>
<reference key="1">
    <citation type="journal article" date="1994" name="Hum. Mol. Genet.">
        <title>A novel gene encoding a B-box protein within the BRCA1 region at 17q21.1.</title>
        <authorList>
            <person name="Campbell I.G."/>
            <person name="Nicolai H.M."/>
            <person name="Foulkes W.D."/>
            <person name="Senger G."/>
            <person name="Stamp G.W."/>
            <person name="Allan G."/>
            <person name="Boyer C."/>
            <person name="Jones K."/>
            <person name="Bast R.C. Jr."/>
            <person name="Solomon E."/>
            <person name="Trowsdale J."/>
            <person name="Black D.M."/>
        </authorList>
    </citation>
    <scope>NUCLEOTIDE SEQUENCE [MRNA] (ISOFORM 1)</scope>
    <scope>VARIANT ARG-923</scope>
    <source>
        <tissue>Ovary</tissue>
    </source>
</reference>
<reference key="2">
    <citation type="journal article" date="1994" name="DNA Res.">
        <title>Prediction of the coding sequences of unidentified human genes. II. The coding sequences of 40 new genes (KIAA0041-KIAA0080) deduced by analysis of cDNA clones from human cell line KG-1.</title>
        <authorList>
            <person name="Nomura N."/>
            <person name="Nagase T."/>
            <person name="Miyajima N."/>
            <person name="Sazuka T."/>
            <person name="Tanaka A."/>
            <person name="Sato S."/>
            <person name="Seki N."/>
            <person name="Kawarabayasi Y."/>
            <person name="Ishikawa K."/>
            <person name="Tabata S."/>
        </authorList>
    </citation>
    <scope>NUCLEOTIDE SEQUENCE [LARGE SCALE MRNA] (ISOFORM 1)</scope>
    <source>
        <tissue>Bone marrow</tissue>
    </source>
</reference>
<reference key="3">
    <citation type="submission" date="2003-10" db="EMBL/GenBank/DDBJ databases">
        <title>Identification of a human migration inducing gene.</title>
        <authorList>
            <person name="Kim J.W."/>
        </authorList>
    </citation>
    <scope>NUCLEOTIDE SEQUENCE [LARGE SCALE MRNA] (ISOFORM 1)</scope>
</reference>
<reference key="4">
    <citation type="journal article" date="2006" name="Nature">
        <title>DNA sequence of human chromosome 17 and analysis of rearrangement in the human lineage.</title>
        <authorList>
            <person name="Zody M.C."/>
            <person name="Garber M."/>
            <person name="Adams D.J."/>
            <person name="Sharpe T."/>
            <person name="Harrow J."/>
            <person name="Lupski J.R."/>
            <person name="Nicholson C."/>
            <person name="Searle S.M."/>
            <person name="Wilming L."/>
            <person name="Young S.K."/>
            <person name="Abouelleil A."/>
            <person name="Allen N.R."/>
            <person name="Bi W."/>
            <person name="Bloom T."/>
            <person name="Borowsky M.L."/>
            <person name="Bugalter B.E."/>
            <person name="Butler J."/>
            <person name="Chang J.L."/>
            <person name="Chen C.-K."/>
            <person name="Cook A."/>
            <person name="Corum B."/>
            <person name="Cuomo C.A."/>
            <person name="de Jong P.J."/>
            <person name="DeCaprio D."/>
            <person name="Dewar K."/>
            <person name="FitzGerald M."/>
            <person name="Gilbert J."/>
            <person name="Gibson R."/>
            <person name="Gnerre S."/>
            <person name="Goldstein S."/>
            <person name="Grafham D.V."/>
            <person name="Grocock R."/>
            <person name="Hafez N."/>
            <person name="Hagopian D.S."/>
            <person name="Hart E."/>
            <person name="Norman C.H."/>
            <person name="Humphray S."/>
            <person name="Jaffe D.B."/>
            <person name="Jones M."/>
            <person name="Kamal M."/>
            <person name="Khodiyar V.K."/>
            <person name="LaButti K."/>
            <person name="Laird G."/>
            <person name="Lehoczky J."/>
            <person name="Liu X."/>
            <person name="Lokyitsang T."/>
            <person name="Loveland J."/>
            <person name="Lui A."/>
            <person name="Macdonald P."/>
            <person name="Major J.E."/>
            <person name="Matthews L."/>
            <person name="Mauceli E."/>
            <person name="McCarroll S.A."/>
            <person name="Mihalev A.H."/>
            <person name="Mudge J."/>
            <person name="Nguyen C."/>
            <person name="Nicol R."/>
            <person name="O'Leary S.B."/>
            <person name="Osoegawa K."/>
            <person name="Schwartz D.C."/>
            <person name="Shaw-Smith C."/>
            <person name="Stankiewicz P."/>
            <person name="Steward C."/>
            <person name="Swarbreck D."/>
            <person name="Venkataraman V."/>
            <person name="Whittaker C.A."/>
            <person name="Yang X."/>
            <person name="Zimmer A.R."/>
            <person name="Bradley A."/>
            <person name="Hubbard T."/>
            <person name="Birren B.W."/>
            <person name="Rogers J."/>
            <person name="Lander E.S."/>
            <person name="Nusbaum C."/>
        </authorList>
    </citation>
    <scope>NUCLEOTIDE SEQUENCE [LARGE SCALE GENOMIC DNA]</scope>
</reference>
<reference key="5">
    <citation type="submission" date="2005-07" db="EMBL/GenBank/DDBJ databases">
        <authorList>
            <person name="Mural R.J."/>
            <person name="Istrail S."/>
            <person name="Sutton G.G."/>
            <person name="Florea L."/>
            <person name="Halpern A.L."/>
            <person name="Mobarry C.M."/>
            <person name="Lippert R."/>
            <person name="Walenz B."/>
            <person name="Shatkay H."/>
            <person name="Dew I."/>
            <person name="Miller J.R."/>
            <person name="Flanigan M.J."/>
            <person name="Edwards N.J."/>
            <person name="Bolanos R."/>
            <person name="Fasulo D."/>
            <person name="Halldorsson B.V."/>
            <person name="Hannenhalli S."/>
            <person name="Turner R."/>
            <person name="Yooseph S."/>
            <person name="Lu F."/>
            <person name="Nusskern D.R."/>
            <person name="Shue B.C."/>
            <person name="Zheng X.H."/>
            <person name="Zhong F."/>
            <person name="Delcher A.L."/>
            <person name="Huson D.H."/>
            <person name="Kravitz S.A."/>
            <person name="Mouchard L."/>
            <person name="Reinert K."/>
            <person name="Remington K.A."/>
            <person name="Clark A.G."/>
            <person name="Waterman M.S."/>
            <person name="Eichler E.E."/>
            <person name="Adams M.D."/>
            <person name="Hunkapiller M.W."/>
            <person name="Myers E.W."/>
            <person name="Venter J.C."/>
        </authorList>
    </citation>
    <scope>NUCLEOTIDE SEQUENCE [LARGE SCALE GENOMIC DNA]</scope>
</reference>
<reference key="6">
    <citation type="journal article" date="2004" name="Genome Res.">
        <title>The status, quality, and expansion of the NIH full-length cDNA project: the Mammalian Gene Collection (MGC).</title>
        <authorList>
            <consortium name="The MGC Project Team"/>
        </authorList>
    </citation>
    <scope>NUCLEOTIDE SEQUENCE [LARGE SCALE MRNA] (ISOFORM 2)</scope>
    <scope>VARIANT ARG-923</scope>
    <source>
        <tissue>Lymph</tissue>
    </source>
</reference>
<reference key="7">
    <citation type="journal article" date="2001" name="Gene">
        <title>Expression profiles and intergenic structure of head-to-head oriented Brca1 and Nbr1 genes.</title>
        <authorList>
            <person name="Dimitrov S."/>
            <person name="Brennerova M."/>
            <person name="Forejt J."/>
        </authorList>
    </citation>
    <scope>NUCLEOTIDE SEQUENCE [MRNA] OF 1-42</scope>
    <scope>VARIANT ARG-923</scope>
    <source>
        <tissue>Testis</tissue>
    </source>
</reference>
<reference key="8">
    <citation type="journal article" date="1995" name="Hum. Mol. Genet.">
        <title>Comparison of the positional cloning methods used to isolate the BRCA1 gene.</title>
        <authorList>
            <person name="Harshman K."/>
            <person name="Bell R."/>
            <person name="Rosenthal J."/>
            <person name="Katcher H."/>
            <person name="Miki Y."/>
            <person name="Swenson J."/>
            <person name="Gholami Z."/>
            <person name="Frye C."/>
            <person name="Ding W."/>
            <person name="Dayananth P."/>
            <person name="Eddington K."/>
            <person name="Norris F.H."/>
            <person name="Bristow P.K."/>
            <person name="Phelps R."/>
            <person name="Hattier T."/>
            <person name="Stone S."/>
            <person name="Shaffer D."/>
            <person name="Bayer S."/>
            <person name="Hussey C."/>
            <person name="Tran T."/>
            <person name="Lai M."/>
            <person name="Rosteck P.R. Jr."/>
            <person name="Skolnick M.H."/>
            <person name="Shattuck-Eidens D."/>
            <person name="Kamb A."/>
        </authorList>
    </citation>
    <scope>NUCLEOTIDE SEQUENCE [GENOMIC DNA] OF 412-508</scope>
</reference>
<reference key="9">
    <citation type="journal article" date="2003" name="J. Biol. Chem.">
        <title>Interaction codes within the family of mammalian Phox and Bem1p domain-containing proteins.</title>
        <authorList>
            <person name="Lamark T."/>
            <person name="Perander M."/>
            <person name="Outzen H."/>
            <person name="Kristiansen K."/>
            <person name="Oevervatn A."/>
            <person name="Michaelsen E."/>
            <person name="Bjoerkoey G."/>
            <person name="Johansen T."/>
        </authorList>
    </citation>
    <scope>INTERACTION WITH SQSTM1</scope>
    <scope>OLIGOMERIZATION</scope>
    <scope>DOMAIN</scope>
    <scope>MUTAGENESIS OF LYS-12 AND ASP-50</scope>
</reference>
<reference key="10">
    <citation type="journal article" date="2005" name="Science">
        <title>The kinase domain of titin controls muscle gene expression and protein turnover.</title>
        <authorList>
            <person name="Lange S."/>
            <person name="Xiang F."/>
            <person name="Yakovenko A."/>
            <person name="Vihola A."/>
            <person name="Hackman P."/>
            <person name="Rostkova E."/>
            <person name="Kristensen J."/>
            <person name="Brandmeier B."/>
            <person name="Franzen G."/>
            <person name="Hedberg B."/>
            <person name="Gunnarsson L.G."/>
            <person name="Hughes S.M."/>
            <person name="Marchand S."/>
            <person name="Sejersen T."/>
            <person name="Richard I."/>
            <person name="Edstroem L."/>
            <person name="Ehler E."/>
            <person name="Udd B."/>
            <person name="Gautel M."/>
        </authorList>
    </citation>
    <scope>INTERACTION WITH SQSTM1; TTN AND RNF29</scope>
</reference>
<reference key="11">
    <citation type="journal article" date="2013" name="Cell Host Microbe">
        <title>The globally disseminated M1T1 clone of group A Streptococcus evades autophagy for intracellular replication.</title>
        <authorList>
            <person name="Barnett T.C."/>
            <person name="Liebl D."/>
            <person name="Seymour L.M."/>
            <person name="Gillen C.M."/>
            <person name="Lim J.Y."/>
            <person name="Larock C.N."/>
            <person name="Davies M.R."/>
            <person name="Schulz B.L."/>
            <person name="Nizet V."/>
            <person name="Teasdale R.D."/>
            <person name="Walker M.J."/>
        </authorList>
    </citation>
    <scope>PROTEOLYTIC CLEAVAGE (MICROBIAL INFECTION)</scope>
</reference>
<reference key="12">
    <citation type="journal article" date="2009" name="FEBS Lett.">
        <title>Interactions with LC3 and polyubiquitin chains link nbr1 to autophagic protein turnover.</title>
        <authorList>
            <person name="Waters S."/>
            <person name="Marchbank K."/>
            <person name="Solomon E."/>
            <person name="Whitehouse C."/>
            <person name="Gautel M."/>
        </authorList>
    </citation>
    <scope>INTERACTION WITH USP8</scope>
    <scope>UBIQUITIN-BINDING</scope>
    <scope>SUBCELLULAR LOCATION</scope>
</reference>
<reference key="13">
    <citation type="journal article" date="2009" name="Mol. Cell">
        <title>A role for NBR1 in autophagosomal degradation of ubiquitinated substrates.</title>
        <authorList>
            <person name="Kirkin V."/>
            <person name="Lamark T."/>
            <person name="Sou Y.S."/>
            <person name="Bjorkoy G."/>
            <person name="Nunn J.L."/>
            <person name="Bruun J.A."/>
            <person name="Shvets E."/>
            <person name="McEwan D.G."/>
            <person name="Clausen T.H."/>
            <person name="Wild P."/>
            <person name="Bilusic I."/>
            <person name="Theurillat J.P."/>
            <person name="Overvatn A."/>
            <person name="Ishii T."/>
            <person name="Elazar Z."/>
            <person name="Komatsu M."/>
            <person name="Dikic I."/>
            <person name="Johansen T."/>
        </authorList>
    </citation>
    <scope>FUNCTION</scope>
    <scope>SUBCELLULAR LOCATION</scope>
    <scope>DOMAIN</scope>
    <scope>INTERACTION WITH SQSTM1; MAP1LC3A; MAP1LC3B; MAP1LC3C; GABARAP; GABARAPL1 AND GABARAPL2</scope>
    <scope>MUTAGENESIS OF ASP-50 AND TYR-732</scope>
</reference>
<reference key="14">
    <citation type="journal article" date="2010" name="Sci. Signal.">
        <title>Quantitative phosphoproteomics reveals widespread full phosphorylation site occupancy during mitosis.</title>
        <authorList>
            <person name="Olsen J.V."/>
            <person name="Vermeulen M."/>
            <person name="Santamaria A."/>
            <person name="Kumar C."/>
            <person name="Miller M.L."/>
            <person name="Jensen L.J."/>
            <person name="Gnad F."/>
            <person name="Cox J."/>
            <person name="Jensen T.S."/>
            <person name="Nigg E.A."/>
            <person name="Brunak S."/>
            <person name="Mann M."/>
        </authorList>
    </citation>
    <scope>IDENTIFICATION BY MASS SPECTROMETRY [LARGE SCALE ANALYSIS]</scope>
    <source>
        <tissue>Cervix carcinoma</tissue>
    </source>
</reference>
<reference key="15">
    <citation type="journal article" date="2013" name="J. Proteome Res.">
        <title>Toward a comprehensive characterization of a human cancer cell phosphoproteome.</title>
        <authorList>
            <person name="Zhou H."/>
            <person name="Di Palma S."/>
            <person name="Preisinger C."/>
            <person name="Peng M."/>
            <person name="Polat A.N."/>
            <person name="Heck A.J."/>
            <person name="Mohammed S."/>
        </authorList>
    </citation>
    <scope>PHOSPHORYLATION [LARGE SCALE ANALYSIS] AT SER-116 AND SER-625</scope>
    <scope>IDENTIFICATION BY MASS SPECTROMETRY [LARGE SCALE ANALYSIS]</scope>
    <source>
        <tissue>Cervix carcinoma</tissue>
        <tissue>Erythroleukemia</tissue>
    </source>
</reference>
<reference key="16">
    <citation type="journal article" date="2014" name="Autophagy">
        <title>Phosphorylation of NBR1 by GSK3 modulates protein aggregation.</title>
        <authorList>
            <person name="Nicot A.S."/>
            <person name="Lo Verso F."/>
            <person name="Ratti F."/>
            <person name="Pilot-Storck F."/>
            <person name="Streichenberger N."/>
            <person name="Sandri M."/>
            <person name="Schaeffer L."/>
            <person name="Goillot E."/>
        </authorList>
    </citation>
    <scope>FUNCTION</scope>
    <scope>PHOSPHORYLATION AT THR-586</scope>
    <scope>MUTAGENESIS OF THR-586</scope>
    <scope>SUBCELLULAR LOCATION</scope>
</reference>
<reference key="17">
    <citation type="journal article" date="2020" name="EMBO J.">
        <title>Receptor-mediated clustering of FIP200 bypasses the role of LC3 lipidation in autophagy.</title>
        <authorList>
            <person name="Ohnstad A.E."/>
            <person name="Delgado J.M."/>
            <person name="North B.J."/>
            <person name="Nasa I."/>
            <person name="Kettenbach A.N."/>
            <person name="Schultz S.W."/>
            <person name="Shoemaker C.J."/>
        </authorList>
    </citation>
    <scope>INTERACTION WITH TAX1BP1</scope>
</reference>
<reference key="18">
    <citation type="journal article" date="2021" name="Nat. Commun.">
        <title>Reconstitution defines the roles of p62, NBR1 and TAX1BP1 in ubiquitin condensate formation and autophagy initiation.</title>
        <authorList>
            <person name="Turco E."/>
            <person name="Savova A."/>
            <person name="Gere F."/>
            <person name="Ferrari L."/>
            <person name="Romanov J."/>
            <person name="Schuschnig M."/>
            <person name="Martens S."/>
        </authorList>
    </citation>
    <scope>INTERACTION WITH TAX1BP1</scope>
    <scope>FUNCTION</scope>
</reference>
<reference key="19">
    <citation type="journal article" date="2021" name="PLoS Pathog.">
        <title>The PB1 protein of influenza A virus inhibits the innate immune response by targeting MAVS for NBR1-mediated selective autophagic degradation.</title>
        <authorList>
            <person name="Zeng Y."/>
            <person name="Xu S."/>
            <person name="Wei Y."/>
            <person name="Zhang X."/>
            <person name="Wang Q."/>
            <person name="Jia Y."/>
            <person name="Wang W."/>
            <person name="Han L."/>
            <person name="Chen Z."/>
            <person name="Wang Z."/>
            <person name="Zhang B."/>
            <person name="Chen H."/>
            <person name="Lei C.Q."/>
            <person name="Zhu Q."/>
        </authorList>
    </citation>
    <scope>FUNCTION</scope>
    <scope>INTERACTION WITH INFLUENZA A VIRUS PB1 (MICROBIAL INFECTION)</scope>
</reference>
<reference key="20">
    <citation type="journal article" date="2022" name="Biochem. Biophys. Res. Commun.">
        <title>NBR1 mediates autophagic degradation of IRF3 to negatively regulate type I interferon production.</title>
        <authorList>
            <person name="Cai Y."/>
            <person name="Zhu Y."/>
            <person name="Zheng J."/>
            <person name="Zhang Y."/>
            <person name="Chen W."/>
        </authorList>
    </citation>
    <scope>FUNCTION</scope>
    <scope>INTERACTION WITH IRF3</scope>
    <scope>INDUCTION BY VIRAL INFECTION</scope>
    <scope>SUBCELLULAR LOCATION</scope>
</reference>
<reference key="21">
    <citation type="submission" date="2005-11" db="PDB data bank">
        <title>Solution structure of RSGI RUH-024, a PB1 domain, and of RSGI RUH-046, a UBA domain from human next to BRCA1 gene 1 protein (KIAA0049 protein) R923H variant.</title>
        <authorList>
            <consortium name="RIKEN structural genomics initiative (RSGI)"/>
        </authorList>
    </citation>
    <scope>STRUCTURE BY NMR OF 1-85 AND 916-956</scope>
</reference>
<reference key="22">
    <citation type="journal article" date="2006" name="FEBS Lett.">
        <title>Crystal structure of the PB1 domain of NBR1.</title>
        <authorList>
            <person name="Mueller S."/>
            <person name="Kursula I."/>
            <person name="Zou P."/>
            <person name="Wilmanns M."/>
        </authorList>
    </citation>
    <scope>X-RAY CRYSTALLOGRAPHY (1.56 ANGSTROMS) OF 1-85</scope>
</reference>
<reference evidence="24 25" key="23">
    <citation type="journal article" date="2014" name="J. Biol. Chem.">
        <title>Solution structure of the ubiquitin-associated (UBA) domain of human autophagy receptor NBR1 and its interaction with ubiquitin and polyubiquitin.</title>
        <authorList>
            <person name="Walinda E."/>
            <person name="Morimoto D."/>
            <person name="Sugase K."/>
            <person name="Konuma T."/>
            <person name="Tochio H."/>
            <person name="Shirakawa M."/>
        </authorList>
    </citation>
    <scope>STRUCTURE BY NMR OF 913-959</scope>
    <scope>FUNCTION</scope>
    <scope>MUTAGENESIS OF GLU-926; GLY-928 AND PHE-929</scope>
    <scope>INTERACTION WITH UBIQUITIN</scope>
</reference>
<dbReference type="EMBL" id="X76952">
    <property type="protein sequence ID" value="CAA54274.1"/>
    <property type="molecule type" value="mRNA"/>
</dbReference>
<dbReference type="EMBL" id="D30756">
    <property type="protein sequence ID" value="BAA06417.2"/>
    <property type="status" value="ALT_INIT"/>
    <property type="molecule type" value="mRNA"/>
</dbReference>
<dbReference type="EMBL" id="AY450308">
    <property type="protein sequence ID" value="AAS15047.1"/>
    <property type="molecule type" value="mRNA"/>
</dbReference>
<dbReference type="EMBL" id="AC060780">
    <property type="status" value="NOT_ANNOTATED_CDS"/>
    <property type="molecule type" value="Genomic_DNA"/>
</dbReference>
<dbReference type="EMBL" id="AC109326">
    <property type="status" value="NOT_ANNOTATED_CDS"/>
    <property type="molecule type" value="Genomic_DNA"/>
</dbReference>
<dbReference type="EMBL" id="CH471152">
    <property type="protein sequence ID" value="EAW60946.1"/>
    <property type="molecule type" value="Genomic_DNA"/>
</dbReference>
<dbReference type="EMBL" id="BC009808">
    <property type="protein sequence ID" value="AAH09808.1"/>
    <property type="molecule type" value="mRNA"/>
</dbReference>
<dbReference type="EMBL" id="AF227189">
    <property type="protein sequence ID" value="AAF74119.1"/>
    <property type="molecule type" value="mRNA"/>
</dbReference>
<dbReference type="EMBL" id="U25764">
    <property type="protein sequence ID" value="AAA93228.1"/>
    <property type="molecule type" value="Genomic_DNA"/>
</dbReference>
<dbReference type="CCDS" id="CCDS45694.1">
    <molecule id="Q14596-1"/>
</dbReference>
<dbReference type="CCDS" id="CCDS77037.1">
    <molecule id="Q14596-2"/>
</dbReference>
<dbReference type="RefSeq" id="NP_001278500.1">
    <molecule id="Q14596-2"/>
    <property type="nucleotide sequence ID" value="NM_001291571.2"/>
</dbReference>
<dbReference type="RefSeq" id="NP_001278501.1">
    <property type="nucleotide sequence ID" value="NM_001291572.1"/>
</dbReference>
<dbReference type="RefSeq" id="NP_005890.2">
    <molecule id="Q14596-1"/>
    <property type="nucleotide sequence ID" value="NM_005899.4"/>
</dbReference>
<dbReference type="RefSeq" id="NP_114068.1">
    <molecule id="Q14596-1"/>
    <property type="nucleotide sequence ID" value="NM_031862.4"/>
</dbReference>
<dbReference type="RefSeq" id="XP_011523115.1">
    <molecule id="Q14596-1"/>
    <property type="nucleotide sequence ID" value="XM_011524813.3"/>
</dbReference>
<dbReference type="RefSeq" id="XP_016880131.1">
    <property type="nucleotide sequence ID" value="XM_017024642.1"/>
</dbReference>
<dbReference type="RefSeq" id="XP_024306517.1">
    <molecule id="Q14596-1"/>
    <property type="nucleotide sequence ID" value="XM_024450749.2"/>
</dbReference>
<dbReference type="RefSeq" id="XP_047292017.1">
    <molecule id="Q14596-1"/>
    <property type="nucleotide sequence ID" value="XM_047436061.1"/>
</dbReference>
<dbReference type="PDB" id="1WJ6">
    <property type="method" value="NMR"/>
    <property type="chains" value="A=1-85"/>
</dbReference>
<dbReference type="PDB" id="2BKF">
    <property type="method" value="X-ray"/>
    <property type="resolution" value="1.56 A"/>
    <property type="chains" value="A=1-85"/>
</dbReference>
<dbReference type="PDB" id="2CP8">
    <property type="method" value="NMR"/>
    <property type="chains" value="A=916-956"/>
</dbReference>
<dbReference type="PDB" id="2G4S">
    <property type="method" value="X-ray"/>
    <property type="resolution" value="2.15 A"/>
    <property type="chains" value="A=1-85"/>
</dbReference>
<dbReference type="PDB" id="2L8J">
    <property type="method" value="NMR"/>
    <property type="chains" value="B=726-738"/>
</dbReference>
<dbReference type="PDB" id="2MGW">
    <property type="method" value="NMR"/>
    <property type="chains" value="A=913-959"/>
</dbReference>
<dbReference type="PDB" id="2MJ5">
    <property type="method" value="NMR"/>
    <property type="chains" value="B=913-959"/>
</dbReference>
<dbReference type="PDB" id="4OLE">
    <property type="method" value="X-ray"/>
    <property type="resolution" value="2.52 A"/>
    <property type="chains" value="A/B/C/D=365-485"/>
</dbReference>
<dbReference type="PDBsum" id="1WJ6"/>
<dbReference type="PDBsum" id="2BKF"/>
<dbReference type="PDBsum" id="2CP8"/>
<dbReference type="PDBsum" id="2G4S"/>
<dbReference type="PDBsum" id="2L8J"/>
<dbReference type="PDBsum" id="2MGW"/>
<dbReference type="PDBsum" id="2MJ5"/>
<dbReference type="PDBsum" id="4OLE"/>
<dbReference type="BMRB" id="Q14596"/>
<dbReference type="SMR" id="Q14596"/>
<dbReference type="BioGRID" id="110253">
    <property type="interactions" value="390"/>
</dbReference>
<dbReference type="CORUM" id="Q14596"/>
<dbReference type="FunCoup" id="Q14596">
    <property type="interactions" value="2787"/>
</dbReference>
<dbReference type="IntAct" id="Q14596">
    <property type="interactions" value="90"/>
</dbReference>
<dbReference type="MINT" id="Q14596"/>
<dbReference type="STRING" id="9606.ENSP00000343479"/>
<dbReference type="GlyConnect" id="363">
    <property type="glycosylation" value="2 O-Linked glycans"/>
</dbReference>
<dbReference type="GlyCosmos" id="Q14596">
    <property type="glycosylation" value="No site information, 4 glycans"/>
</dbReference>
<dbReference type="GlyGen" id="Q14596">
    <property type="glycosylation" value="1 site, 4 O-linked glycans (1 site)"/>
</dbReference>
<dbReference type="iPTMnet" id="Q14596"/>
<dbReference type="PhosphoSitePlus" id="Q14596"/>
<dbReference type="BioMuta" id="NBR1"/>
<dbReference type="DMDM" id="296439290"/>
<dbReference type="jPOST" id="Q14596"/>
<dbReference type="MassIVE" id="Q14596"/>
<dbReference type="PaxDb" id="9606-ENSP00000411250"/>
<dbReference type="PeptideAtlas" id="Q14596"/>
<dbReference type="ProteomicsDB" id="60070">
    <molecule id="Q14596-1"/>
</dbReference>
<dbReference type="ProteomicsDB" id="60071">
    <molecule id="Q14596-2"/>
</dbReference>
<dbReference type="Pumba" id="Q14596"/>
<dbReference type="Antibodypedia" id="8116">
    <property type="antibodies" value="309 antibodies from 33 providers"/>
</dbReference>
<dbReference type="DNASU" id="4077"/>
<dbReference type="Ensembl" id="ENST00000341165.10">
    <molecule id="Q14596-1"/>
    <property type="protein sequence ID" value="ENSP00000343479.5"/>
    <property type="gene ID" value="ENSG00000188554.15"/>
</dbReference>
<dbReference type="Ensembl" id="ENST00000589872.1">
    <molecule id="Q14596-2"/>
    <property type="protein sequence ID" value="ENSP00000467816.1"/>
    <property type="gene ID" value="ENSG00000188554.15"/>
</dbReference>
<dbReference type="Ensembl" id="ENST00000590996.6">
    <molecule id="Q14596-1"/>
    <property type="protein sequence ID" value="ENSP00000466667.1"/>
    <property type="gene ID" value="ENSG00000188554.15"/>
</dbReference>
<dbReference type="GeneID" id="4077"/>
<dbReference type="KEGG" id="hsa:4077"/>
<dbReference type="MANE-Select" id="ENST00000590996.6">
    <property type="protein sequence ID" value="ENSP00000466667.1"/>
    <property type="RefSeq nucleotide sequence ID" value="NM_005899.5"/>
    <property type="RefSeq protein sequence ID" value="NP_005890.2"/>
</dbReference>
<dbReference type="UCSC" id="uc010czd.4">
    <molecule id="Q14596-1"/>
    <property type="organism name" value="human"/>
</dbReference>
<dbReference type="AGR" id="HGNC:6746"/>
<dbReference type="CTD" id="4077"/>
<dbReference type="DisGeNET" id="4077"/>
<dbReference type="GeneCards" id="NBR1"/>
<dbReference type="HGNC" id="HGNC:6746">
    <property type="gene designation" value="NBR1"/>
</dbReference>
<dbReference type="HPA" id="ENSG00000188554">
    <property type="expression patterns" value="Low tissue specificity"/>
</dbReference>
<dbReference type="MIM" id="166945">
    <property type="type" value="gene"/>
</dbReference>
<dbReference type="neXtProt" id="NX_Q14596"/>
<dbReference type="OpenTargets" id="ENSG00000188554"/>
<dbReference type="PharmGKB" id="PA30510"/>
<dbReference type="VEuPathDB" id="HostDB:ENSG00000188554"/>
<dbReference type="eggNOG" id="KOG4351">
    <property type="taxonomic scope" value="Eukaryota"/>
</dbReference>
<dbReference type="eggNOG" id="KOG4582">
    <property type="taxonomic scope" value="Eukaryota"/>
</dbReference>
<dbReference type="GeneTree" id="ENSGT00390000016335"/>
<dbReference type="HOGENOM" id="CLU_014175_0_0_1"/>
<dbReference type="InParanoid" id="Q14596"/>
<dbReference type="OMA" id="SHWRLTQ"/>
<dbReference type="OrthoDB" id="661148at2759"/>
<dbReference type="PAN-GO" id="Q14596">
    <property type="GO annotations" value="3 GO annotations based on evolutionary models"/>
</dbReference>
<dbReference type="PhylomeDB" id="Q14596"/>
<dbReference type="TreeFam" id="TF328428"/>
<dbReference type="PathwayCommons" id="Q14596"/>
<dbReference type="Reactome" id="R-HSA-9664873">
    <property type="pathway name" value="Pexophagy"/>
</dbReference>
<dbReference type="SignaLink" id="Q14596"/>
<dbReference type="SIGNOR" id="Q14596"/>
<dbReference type="BioGRID-ORCS" id="4077">
    <property type="hits" value="25 hits in 1159 CRISPR screens"/>
</dbReference>
<dbReference type="CD-CODE" id="3393144B">
    <property type="entry name" value="P62 cluster"/>
</dbReference>
<dbReference type="CD-CODE" id="98C8800A">
    <property type="entry name" value="Synthetic Condensate 000338"/>
</dbReference>
<dbReference type="CD-CODE" id="F17BA747">
    <property type="entry name" value="P62 cluster"/>
</dbReference>
<dbReference type="ChiTaRS" id="NBR1">
    <property type="organism name" value="human"/>
</dbReference>
<dbReference type="EvolutionaryTrace" id="Q14596"/>
<dbReference type="GeneWiki" id="NBR1"/>
<dbReference type="GenomeRNAi" id="4077"/>
<dbReference type="Pharos" id="Q14596">
    <property type="development level" value="Tbio"/>
</dbReference>
<dbReference type="PRO" id="PR:Q14596"/>
<dbReference type="Proteomes" id="UP000005640">
    <property type="component" value="Chromosome 17"/>
</dbReference>
<dbReference type="RNAct" id="Q14596">
    <property type="molecule type" value="protein"/>
</dbReference>
<dbReference type="Bgee" id="ENSG00000188554">
    <property type="expression patterns" value="Expressed in tendon of biceps brachii and 215 other cell types or tissues"/>
</dbReference>
<dbReference type="ExpressionAtlas" id="Q14596">
    <property type="expression patterns" value="baseline and differential"/>
</dbReference>
<dbReference type="GO" id="GO:0005776">
    <property type="term" value="C:autophagosome"/>
    <property type="evidence" value="ECO:0007669"/>
    <property type="project" value="UniProtKB-SubCell"/>
</dbReference>
<dbReference type="GO" id="GO:0005829">
    <property type="term" value="C:cytosol"/>
    <property type="evidence" value="ECO:0000314"/>
    <property type="project" value="UniProtKB"/>
</dbReference>
<dbReference type="GO" id="GO:0043231">
    <property type="term" value="C:intracellular membrane-bounded organelle"/>
    <property type="evidence" value="ECO:0000314"/>
    <property type="project" value="HPA"/>
</dbReference>
<dbReference type="GO" id="GO:0005770">
    <property type="term" value="C:late endosome"/>
    <property type="evidence" value="ECO:0000250"/>
    <property type="project" value="UniProtKB"/>
</dbReference>
<dbReference type="GO" id="GO:0005764">
    <property type="term" value="C:lysosome"/>
    <property type="evidence" value="ECO:0007669"/>
    <property type="project" value="UniProtKB-SubCell"/>
</dbReference>
<dbReference type="GO" id="GO:0031430">
    <property type="term" value="C:M band"/>
    <property type="evidence" value="ECO:0007669"/>
    <property type="project" value="UniProtKB-SubCell"/>
</dbReference>
<dbReference type="GO" id="GO:0016020">
    <property type="term" value="C:membrane"/>
    <property type="evidence" value="ECO:0007005"/>
    <property type="project" value="UniProtKB"/>
</dbReference>
<dbReference type="GO" id="GO:0005758">
    <property type="term" value="C:mitochondrial intermembrane space"/>
    <property type="evidence" value="ECO:0007669"/>
    <property type="project" value="Ensembl"/>
</dbReference>
<dbReference type="GO" id="GO:0016604">
    <property type="term" value="C:nuclear body"/>
    <property type="evidence" value="ECO:0000314"/>
    <property type="project" value="HPA"/>
</dbReference>
<dbReference type="GO" id="GO:0005654">
    <property type="term" value="C:nucleoplasm"/>
    <property type="evidence" value="ECO:0000314"/>
    <property type="project" value="HPA"/>
</dbReference>
<dbReference type="GO" id="GO:0005778">
    <property type="term" value="C:peroxisomal membrane"/>
    <property type="evidence" value="ECO:0000304"/>
    <property type="project" value="Reactome"/>
</dbReference>
<dbReference type="GO" id="GO:0000407">
    <property type="term" value="C:phagophore assembly site"/>
    <property type="evidence" value="ECO:0000318"/>
    <property type="project" value="GO_Central"/>
</dbReference>
<dbReference type="GO" id="GO:0043235">
    <property type="term" value="C:receptor complex"/>
    <property type="evidence" value="ECO:0000314"/>
    <property type="project" value="UniProtKB"/>
</dbReference>
<dbReference type="GO" id="GO:0051019">
    <property type="term" value="F:mitogen-activated protein kinase binding"/>
    <property type="evidence" value="ECO:0000250"/>
    <property type="project" value="BHF-UCL"/>
</dbReference>
<dbReference type="GO" id="GO:0043130">
    <property type="term" value="F:ubiquitin binding"/>
    <property type="evidence" value="ECO:0000314"/>
    <property type="project" value="UniProtKB"/>
</dbReference>
<dbReference type="GO" id="GO:0008270">
    <property type="term" value="F:zinc ion binding"/>
    <property type="evidence" value="ECO:0007669"/>
    <property type="project" value="UniProtKB-KW"/>
</dbReference>
<dbReference type="GO" id="GO:0016236">
    <property type="term" value="P:macroautophagy"/>
    <property type="evidence" value="ECO:0000314"/>
    <property type="project" value="UniProtKB"/>
</dbReference>
<dbReference type="GO" id="GO:0045668">
    <property type="term" value="P:negative regulation of osteoblast differentiation"/>
    <property type="evidence" value="ECO:0000250"/>
    <property type="project" value="BHF-UCL"/>
</dbReference>
<dbReference type="GO" id="GO:0030500">
    <property type="term" value="P:regulation of bone mineralization"/>
    <property type="evidence" value="ECO:0000250"/>
    <property type="project" value="BHF-UCL"/>
</dbReference>
<dbReference type="GO" id="GO:0032872">
    <property type="term" value="P:regulation of stress-activated MAPK cascade"/>
    <property type="evidence" value="ECO:0000250"/>
    <property type="project" value="BHF-UCL"/>
</dbReference>
<dbReference type="CDD" id="cd14947">
    <property type="entry name" value="NBR1_like"/>
    <property type="match status" value="1"/>
</dbReference>
<dbReference type="CDD" id="cd06396">
    <property type="entry name" value="PB1_NBR1"/>
    <property type="match status" value="1"/>
</dbReference>
<dbReference type="CDD" id="cd14319">
    <property type="entry name" value="UBA_NBR1"/>
    <property type="match status" value="1"/>
</dbReference>
<dbReference type="CDD" id="cd02340">
    <property type="entry name" value="ZZ_NBR1_like"/>
    <property type="match status" value="1"/>
</dbReference>
<dbReference type="FunFam" id="1.10.8.10:FF:000033">
    <property type="entry name" value="Next to BRCA1 gene 1 protein"/>
    <property type="match status" value="1"/>
</dbReference>
<dbReference type="FunFam" id="3.10.20.90:FF:000291">
    <property type="entry name" value="Next to BRCA1 gene 1 protein"/>
    <property type="match status" value="1"/>
</dbReference>
<dbReference type="FunFam" id="3.30.60.90:FF:000007">
    <property type="entry name" value="Next to BRCA1 gene 1 protein"/>
    <property type="match status" value="1"/>
</dbReference>
<dbReference type="FunFam" id="2.60.40.10:FF:000199">
    <property type="entry name" value="next to BRCA1 gene 1 protein-like"/>
    <property type="match status" value="1"/>
</dbReference>
<dbReference type="Gene3D" id="3.30.60.90">
    <property type="match status" value="1"/>
</dbReference>
<dbReference type="Gene3D" id="1.10.8.10">
    <property type="entry name" value="DNA helicase RuvA subunit, C-terminal domain"/>
    <property type="match status" value="1"/>
</dbReference>
<dbReference type="Gene3D" id="2.60.40.10">
    <property type="entry name" value="Immunoglobulins"/>
    <property type="match status" value="1"/>
</dbReference>
<dbReference type="Gene3D" id="3.10.20.90">
    <property type="entry name" value="Phosphatidylinositol 3-kinase Catalytic Subunit, Chain A, domain 1"/>
    <property type="match status" value="1"/>
</dbReference>
<dbReference type="InterPro" id="IPR013783">
    <property type="entry name" value="Ig-like_fold"/>
</dbReference>
<dbReference type="InterPro" id="IPR032350">
    <property type="entry name" value="N_BRCA1_central"/>
</dbReference>
<dbReference type="InterPro" id="IPR053793">
    <property type="entry name" value="PB1-like"/>
</dbReference>
<dbReference type="InterPro" id="IPR000270">
    <property type="entry name" value="PB1_dom"/>
</dbReference>
<dbReference type="InterPro" id="IPR034852">
    <property type="entry name" value="PB1_NBR1"/>
</dbReference>
<dbReference type="InterPro" id="IPR015940">
    <property type="entry name" value="UBA"/>
</dbReference>
<dbReference type="InterPro" id="IPR009060">
    <property type="entry name" value="UBA-like_sf"/>
</dbReference>
<dbReference type="InterPro" id="IPR056893">
    <property type="entry name" value="UBA_NBR1_C"/>
</dbReference>
<dbReference type="InterPro" id="IPR000433">
    <property type="entry name" value="Znf_ZZ"/>
</dbReference>
<dbReference type="InterPro" id="IPR043145">
    <property type="entry name" value="Znf_ZZ_sf"/>
</dbReference>
<dbReference type="PANTHER" id="PTHR20930:SF2">
    <property type="entry name" value="NEXT TO BRCA1 GENE 1 PROTEIN"/>
    <property type="match status" value="1"/>
</dbReference>
<dbReference type="PANTHER" id="PTHR20930">
    <property type="entry name" value="OVARIAN CARCINOMA ANTIGEN CA125-RELATED"/>
    <property type="match status" value="1"/>
</dbReference>
<dbReference type="Pfam" id="PF16158">
    <property type="entry name" value="N_BRCA1_IG"/>
    <property type="match status" value="1"/>
</dbReference>
<dbReference type="Pfam" id="PF00564">
    <property type="entry name" value="PB1"/>
    <property type="match status" value="1"/>
</dbReference>
<dbReference type="Pfam" id="PF24932">
    <property type="entry name" value="UBA_NBR1_C"/>
    <property type="match status" value="1"/>
</dbReference>
<dbReference type="Pfam" id="PF00569">
    <property type="entry name" value="ZZ"/>
    <property type="match status" value="1"/>
</dbReference>
<dbReference type="SMART" id="SM00666">
    <property type="entry name" value="PB1"/>
    <property type="match status" value="1"/>
</dbReference>
<dbReference type="SMART" id="SM00291">
    <property type="entry name" value="ZnF_ZZ"/>
    <property type="match status" value="1"/>
</dbReference>
<dbReference type="SUPFAM" id="SSF54277">
    <property type="entry name" value="CAD &amp; PB1 domains"/>
    <property type="match status" value="1"/>
</dbReference>
<dbReference type="SUPFAM" id="SSF57850">
    <property type="entry name" value="RING/U-box"/>
    <property type="match status" value="1"/>
</dbReference>
<dbReference type="SUPFAM" id="SSF46934">
    <property type="entry name" value="UBA-like"/>
    <property type="match status" value="1"/>
</dbReference>
<dbReference type="PROSITE" id="PS51745">
    <property type="entry name" value="PB1"/>
    <property type="match status" value="1"/>
</dbReference>
<dbReference type="PROSITE" id="PS50030">
    <property type="entry name" value="UBA"/>
    <property type="match status" value="1"/>
</dbReference>
<dbReference type="PROSITE" id="PS01357">
    <property type="entry name" value="ZF_ZZ_1"/>
    <property type="match status" value="1"/>
</dbReference>
<dbReference type="PROSITE" id="PS50135">
    <property type="entry name" value="ZF_ZZ_2"/>
    <property type="match status" value="1"/>
</dbReference>